<protein>
    <recommendedName>
        <fullName>Suppressor of tumorigenicity 7 protein-like</fullName>
    </recommendedName>
    <alternativeName>
        <fullName>ST7-related protein</fullName>
    </alternativeName>
</protein>
<keyword id="KW-0025">Alternative splicing</keyword>
<keyword id="KW-0472">Membrane</keyword>
<keyword id="KW-1185">Reference proteome</keyword>
<keyword id="KW-0812">Transmembrane</keyword>
<keyword id="KW-1133">Transmembrane helix</keyword>
<sequence>MADGDYFAEAARAVGCPHAPVPGLGLGPPLGWKERLKAGLANSGSTLWFLAGLGLLYALRVPLRLCDNVTAVTGFLSSLTPKFYVALTGTSSLISGLIFIFEWWYFHKHGTSFIEQVSISHLRPLMGGTESSISEPGSPANSRESETLRHHHLSECKVWRNPLNLFRGAEYRRYTWVTGKEPLTYYDMNLSAQDHQTFFTCETDFLRPSDTVMQKAWRERNPPARIKAAYQALELNNDCATAYVLLAEEEATTIVDAERLFKQALRAGEIIYRRSQQCQHQSPQHEAQLRRDTNVLVYIKRRLAMCARKLGRIREAVKIMRDLMKEFPPLTMLNIHENLLESLLELQAYADVQAVLAKYDDISLPKSAAICYTAALLKTRTVSDKFSPETAFRKGLSTAEINAVEAIHRAVEFNPHVPKYLLEMKSLILPPEHILKRGDSEAIAYAFFHLQHWKRIEGALNLLQCTWEGTFRMIPYPLEKGHLFYPYPSCTETADRELLPTFHHVSVYPKKELPFFIHFTAGLCSSTAMLAFLTHQFPEVMGVFAKAVSMISRTCVEYL</sequence>
<feature type="chain" id="PRO_0000339228" description="Suppressor of tumorigenicity 7 protein-like">
    <location>
        <begin position="1"/>
        <end position="559"/>
    </location>
</feature>
<feature type="transmembrane region" description="Helical" evidence="1">
    <location>
        <begin position="39"/>
        <end position="59"/>
    </location>
</feature>
<feature type="transmembrane region" description="Helical" evidence="1">
    <location>
        <begin position="83"/>
        <end position="103"/>
    </location>
</feature>
<feature type="transmembrane region" description="Helical" evidence="1">
    <location>
        <begin position="513"/>
        <end position="533"/>
    </location>
</feature>
<feature type="splice variant" id="VSP_034137" description="In isoform 3." evidence="3">
    <original>VMQKAWRERNPPARIKAAYQALELNNDCATAYVLLAEEEATTIVDAERLFKQALRAGEIIYRRSQQCQHQSPQHEAQLR</original>
    <variation>G</variation>
    <location>
        <begin position="212"/>
        <end position="290"/>
    </location>
</feature>
<feature type="splice variant" id="VSP_034138" description="In isoform 2." evidence="3">
    <location>
        <begin position="420"/>
        <end position="451"/>
    </location>
</feature>
<organism>
    <name type="scientific">Mus musculus</name>
    <name type="common">Mouse</name>
    <dbReference type="NCBI Taxonomy" id="10090"/>
    <lineage>
        <taxon>Eukaryota</taxon>
        <taxon>Metazoa</taxon>
        <taxon>Chordata</taxon>
        <taxon>Craniata</taxon>
        <taxon>Vertebrata</taxon>
        <taxon>Euteleostomi</taxon>
        <taxon>Mammalia</taxon>
        <taxon>Eutheria</taxon>
        <taxon>Euarchontoglires</taxon>
        <taxon>Glires</taxon>
        <taxon>Rodentia</taxon>
        <taxon>Myomorpha</taxon>
        <taxon>Muroidea</taxon>
        <taxon>Muridae</taxon>
        <taxon>Murinae</taxon>
        <taxon>Mus</taxon>
        <taxon>Mus</taxon>
    </lineage>
</organism>
<gene>
    <name type="primary">St7l</name>
    <name type="synonym">St7r</name>
</gene>
<comment type="subcellular location">
    <subcellularLocation>
        <location evidence="4">Membrane</location>
        <topology evidence="4">Multi-pass membrane protein</topology>
    </subcellularLocation>
</comment>
<comment type="alternative products">
    <event type="alternative splicing"/>
    <isoform>
        <id>Q8K4P7-1</id>
        <name>1</name>
        <sequence type="displayed"/>
    </isoform>
    <isoform>
        <id>Q8K4P7-2</id>
        <name>2</name>
        <sequence type="described" ref="VSP_034138"/>
    </isoform>
    <isoform>
        <id>Q8K4P7-3</id>
        <name>3</name>
        <sequence type="described" ref="VSP_034137"/>
    </isoform>
</comment>
<comment type="tissue specificity">
    <text evidence="2">Ubiquitously expressed.</text>
</comment>
<comment type="similarity">
    <text evidence="4">Belongs to the ST7 family.</text>
</comment>
<accession>Q8K4P7</accession>
<accession>Q3T9Y2</accession>
<accession>Q3UNR1</accession>
<proteinExistence type="evidence at transcript level"/>
<name>ST7L_MOUSE</name>
<reference key="1">
    <citation type="journal article" date="2002" name="Int. J. Mol. Med.">
        <title>Molecular cloning and characterization of mouse St7r (St7-like, St7l).</title>
        <authorList>
            <person name="Saitoh T."/>
            <person name="Katoh M."/>
        </authorList>
    </citation>
    <scope>NUCLEOTIDE SEQUENCE [MRNA] (ISOFORM 1)</scope>
    <scope>TISSUE SPECIFICITY</scope>
</reference>
<reference key="2">
    <citation type="journal article" date="2005" name="Science">
        <title>The transcriptional landscape of the mammalian genome.</title>
        <authorList>
            <person name="Carninci P."/>
            <person name="Kasukawa T."/>
            <person name="Katayama S."/>
            <person name="Gough J."/>
            <person name="Frith M.C."/>
            <person name="Maeda N."/>
            <person name="Oyama R."/>
            <person name="Ravasi T."/>
            <person name="Lenhard B."/>
            <person name="Wells C."/>
            <person name="Kodzius R."/>
            <person name="Shimokawa K."/>
            <person name="Bajic V.B."/>
            <person name="Brenner S.E."/>
            <person name="Batalov S."/>
            <person name="Forrest A.R."/>
            <person name="Zavolan M."/>
            <person name="Davis M.J."/>
            <person name="Wilming L.G."/>
            <person name="Aidinis V."/>
            <person name="Allen J.E."/>
            <person name="Ambesi-Impiombato A."/>
            <person name="Apweiler R."/>
            <person name="Aturaliya R.N."/>
            <person name="Bailey T.L."/>
            <person name="Bansal M."/>
            <person name="Baxter L."/>
            <person name="Beisel K.W."/>
            <person name="Bersano T."/>
            <person name="Bono H."/>
            <person name="Chalk A.M."/>
            <person name="Chiu K.P."/>
            <person name="Choudhary V."/>
            <person name="Christoffels A."/>
            <person name="Clutterbuck D.R."/>
            <person name="Crowe M.L."/>
            <person name="Dalla E."/>
            <person name="Dalrymple B.P."/>
            <person name="de Bono B."/>
            <person name="Della Gatta G."/>
            <person name="di Bernardo D."/>
            <person name="Down T."/>
            <person name="Engstrom P."/>
            <person name="Fagiolini M."/>
            <person name="Faulkner G."/>
            <person name="Fletcher C.F."/>
            <person name="Fukushima T."/>
            <person name="Furuno M."/>
            <person name="Futaki S."/>
            <person name="Gariboldi M."/>
            <person name="Georgii-Hemming P."/>
            <person name="Gingeras T.R."/>
            <person name="Gojobori T."/>
            <person name="Green R.E."/>
            <person name="Gustincich S."/>
            <person name="Harbers M."/>
            <person name="Hayashi Y."/>
            <person name="Hensch T.K."/>
            <person name="Hirokawa N."/>
            <person name="Hill D."/>
            <person name="Huminiecki L."/>
            <person name="Iacono M."/>
            <person name="Ikeo K."/>
            <person name="Iwama A."/>
            <person name="Ishikawa T."/>
            <person name="Jakt M."/>
            <person name="Kanapin A."/>
            <person name="Katoh M."/>
            <person name="Kawasawa Y."/>
            <person name="Kelso J."/>
            <person name="Kitamura H."/>
            <person name="Kitano H."/>
            <person name="Kollias G."/>
            <person name="Krishnan S.P."/>
            <person name="Kruger A."/>
            <person name="Kummerfeld S.K."/>
            <person name="Kurochkin I.V."/>
            <person name="Lareau L.F."/>
            <person name="Lazarevic D."/>
            <person name="Lipovich L."/>
            <person name="Liu J."/>
            <person name="Liuni S."/>
            <person name="McWilliam S."/>
            <person name="Madan Babu M."/>
            <person name="Madera M."/>
            <person name="Marchionni L."/>
            <person name="Matsuda H."/>
            <person name="Matsuzawa S."/>
            <person name="Miki H."/>
            <person name="Mignone F."/>
            <person name="Miyake S."/>
            <person name="Morris K."/>
            <person name="Mottagui-Tabar S."/>
            <person name="Mulder N."/>
            <person name="Nakano N."/>
            <person name="Nakauchi H."/>
            <person name="Ng P."/>
            <person name="Nilsson R."/>
            <person name="Nishiguchi S."/>
            <person name="Nishikawa S."/>
            <person name="Nori F."/>
            <person name="Ohara O."/>
            <person name="Okazaki Y."/>
            <person name="Orlando V."/>
            <person name="Pang K.C."/>
            <person name="Pavan W.J."/>
            <person name="Pavesi G."/>
            <person name="Pesole G."/>
            <person name="Petrovsky N."/>
            <person name="Piazza S."/>
            <person name="Reed J."/>
            <person name="Reid J.F."/>
            <person name="Ring B.Z."/>
            <person name="Ringwald M."/>
            <person name="Rost B."/>
            <person name="Ruan Y."/>
            <person name="Salzberg S.L."/>
            <person name="Sandelin A."/>
            <person name="Schneider C."/>
            <person name="Schoenbach C."/>
            <person name="Sekiguchi K."/>
            <person name="Semple C.A."/>
            <person name="Seno S."/>
            <person name="Sessa L."/>
            <person name="Sheng Y."/>
            <person name="Shibata Y."/>
            <person name="Shimada H."/>
            <person name="Shimada K."/>
            <person name="Silva D."/>
            <person name="Sinclair B."/>
            <person name="Sperling S."/>
            <person name="Stupka E."/>
            <person name="Sugiura K."/>
            <person name="Sultana R."/>
            <person name="Takenaka Y."/>
            <person name="Taki K."/>
            <person name="Tammoja K."/>
            <person name="Tan S.L."/>
            <person name="Tang S."/>
            <person name="Taylor M.S."/>
            <person name="Tegner J."/>
            <person name="Teichmann S.A."/>
            <person name="Ueda H.R."/>
            <person name="van Nimwegen E."/>
            <person name="Verardo R."/>
            <person name="Wei C.L."/>
            <person name="Yagi K."/>
            <person name="Yamanishi H."/>
            <person name="Zabarovsky E."/>
            <person name="Zhu S."/>
            <person name="Zimmer A."/>
            <person name="Hide W."/>
            <person name="Bult C."/>
            <person name="Grimmond S.M."/>
            <person name="Teasdale R.D."/>
            <person name="Liu E.T."/>
            <person name="Brusic V."/>
            <person name="Quackenbush J."/>
            <person name="Wahlestedt C."/>
            <person name="Mattick J.S."/>
            <person name="Hume D.A."/>
            <person name="Kai C."/>
            <person name="Sasaki D."/>
            <person name="Tomaru Y."/>
            <person name="Fukuda S."/>
            <person name="Kanamori-Katayama M."/>
            <person name="Suzuki M."/>
            <person name="Aoki J."/>
            <person name="Arakawa T."/>
            <person name="Iida J."/>
            <person name="Imamura K."/>
            <person name="Itoh M."/>
            <person name="Kato T."/>
            <person name="Kawaji H."/>
            <person name="Kawagashira N."/>
            <person name="Kawashima T."/>
            <person name="Kojima M."/>
            <person name="Kondo S."/>
            <person name="Konno H."/>
            <person name="Nakano K."/>
            <person name="Ninomiya N."/>
            <person name="Nishio T."/>
            <person name="Okada M."/>
            <person name="Plessy C."/>
            <person name="Shibata K."/>
            <person name="Shiraki T."/>
            <person name="Suzuki S."/>
            <person name="Tagami M."/>
            <person name="Waki K."/>
            <person name="Watahiki A."/>
            <person name="Okamura-Oho Y."/>
            <person name="Suzuki H."/>
            <person name="Kawai J."/>
            <person name="Hayashizaki Y."/>
        </authorList>
    </citation>
    <scope>NUCLEOTIDE SEQUENCE [LARGE SCALE MRNA] (ISOFORMS 2 AND 3)</scope>
    <source>
        <strain>C57BL/6J</strain>
        <strain>NOD</strain>
        <tissue>Spleen</tissue>
    </source>
</reference>
<reference key="3">
    <citation type="journal article" date="2004" name="Genome Res.">
        <title>The status, quality, and expansion of the NIH full-length cDNA project: the Mammalian Gene Collection (MGC).</title>
        <authorList>
            <consortium name="The MGC Project Team"/>
        </authorList>
    </citation>
    <scope>NUCLEOTIDE SEQUENCE [LARGE SCALE MRNA] (ISOFORM 1)</scope>
    <source>
        <tissue>Brain</tissue>
        <tissue>Olfactory epithelium</tissue>
    </source>
</reference>
<evidence type="ECO:0000255" key="1"/>
<evidence type="ECO:0000269" key="2">
    <source>
    </source>
</evidence>
<evidence type="ECO:0000303" key="3">
    <source>
    </source>
</evidence>
<evidence type="ECO:0000305" key="4"/>
<dbReference type="EMBL" id="AB084518">
    <property type="protein sequence ID" value="BAB91408.1"/>
    <property type="molecule type" value="mRNA"/>
</dbReference>
<dbReference type="EMBL" id="AK144075">
    <property type="protein sequence ID" value="BAE25686.1"/>
    <property type="molecule type" value="mRNA"/>
</dbReference>
<dbReference type="EMBL" id="AK172102">
    <property type="protein sequence ID" value="BAE42827.1"/>
    <property type="molecule type" value="mRNA"/>
</dbReference>
<dbReference type="EMBL" id="AK172218">
    <property type="protein sequence ID" value="BAE42888.1"/>
    <property type="molecule type" value="mRNA"/>
</dbReference>
<dbReference type="EMBL" id="BC058781">
    <property type="protein sequence ID" value="AAH58781.1"/>
    <property type="molecule type" value="mRNA"/>
</dbReference>
<dbReference type="EMBL" id="BC107394">
    <property type="protein sequence ID" value="AAI07395.1"/>
    <property type="molecule type" value="mRNA"/>
</dbReference>
<dbReference type="EMBL" id="BC145950">
    <property type="protein sequence ID" value="AAI45951.1"/>
    <property type="molecule type" value="mRNA"/>
</dbReference>
<dbReference type="CCDS" id="CCDS17705.1">
    <molecule id="Q8K4P7-1"/>
</dbReference>
<dbReference type="CCDS" id="CCDS57250.1">
    <molecule id="Q8K4P7-2"/>
</dbReference>
<dbReference type="CCDS" id="CCDS79994.1">
    <molecule id="Q8K4P7-3"/>
</dbReference>
<dbReference type="RefSeq" id="NP_001240631.1">
    <molecule id="Q8K4P7-2"/>
    <property type="nucleotide sequence ID" value="NM_001253702.1"/>
</dbReference>
<dbReference type="RefSeq" id="NP_001240632.1">
    <molecule id="Q8K4P7-3"/>
    <property type="nucleotide sequence ID" value="NM_001253703.1"/>
</dbReference>
<dbReference type="RefSeq" id="NP_694731.1">
    <molecule id="Q8K4P7-1"/>
    <property type="nucleotide sequence ID" value="NM_153091.3"/>
</dbReference>
<dbReference type="SMR" id="Q8K4P7"/>
<dbReference type="BioGRID" id="230882">
    <property type="interactions" value="1"/>
</dbReference>
<dbReference type="FunCoup" id="Q8K4P7">
    <property type="interactions" value="129"/>
</dbReference>
<dbReference type="STRING" id="10090.ENSMUSP00000058455"/>
<dbReference type="GlyGen" id="Q8K4P7">
    <property type="glycosylation" value="1 site, 1 N-linked glycan (1 site)"/>
</dbReference>
<dbReference type="iPTMnet" id="Q8K4P7"/>
<dbReference type="PhosphoSitePlus" id="Q8K4P7"/>
<dbReference type="PaxDb" id="10090-ENSMUSP00000058455"/>
<dbReference type="PeptideAtlas" id="Q8K4P7"/>
<dbReference type="ProteomicsDB" id="257085">
    <molecule id="Q8K4P7-1"/>
</dbReference>
<dbReference type="ProteomicsDB" id="257086">
    <molecule id="Q8K4P7-2"/>
</dbReference>
<dbReference type="ProteomicsDB" id="257087">
    <molecule id="Q8K4P7-3"/>
</dbReference>
<dbReference type="Pumba" id="Q8K4P7"/>
<dbReference type="Antibodypedia" id="46941">
    <property type="antibodies" value="38 antibodies from 16 providers"/>
</dbReference>
<dbReference type="DNASU" id="229681"/>
<dbReference type="Ensembl" id="ENSMUST00000059271.13">
    <molecule id="Q8K4P7-1"/>
    <property type="protein sequence ID" value="ENSMUSP00000058455.7"/>
    <property type="gene ID" value="ENSMUSG00000045576.17"/>
</dbReference>
<dbReference type="Ensembl" id="ENSMUST00000106769.8">
    <molecule id="Q8K4P7-2"/>
    <property type="protein sequence ID" value="ENSMUSP00000102380.2"/>
    <property type="gene ID" value="ENSMUSG00000045576.17"/>
</dbReference>
<dbReference type="Ensembl" id="ENSMUST00000200132.5">
    <molecule id="Q8K4P7-3"/>
    <property type="protein sequence ID" value="ENSMUSP00000143759.2"/>
    <property type="gene ID" value="ENSMUSG00000045576.17"/>
</dbReference>
<dbReference type="GeneID" id="229681"/>
<dbReference type="KEGG" id="mmu:229681"/>
<dbReference type="UCSC" id="uc008qur.2">
    <molecule id="Q8K4P7-1"/>
    <property type="organism name" value="mouse"/>
</dbReference>
<dbReference type="UCSC" id="uc008qus.2">
    <molecule id="Q8K4P7-2"/>
    <property type="organism name" value="mouse"/>
</dbReference>
<dbReference type="UCSC" id="uc012cvm.2">
    <molecule id="Q8K4P7-3"/>
    <property type="organism name" value="mouse"/>
</dbReference>
<dbReference type="AGR" id="MGI:2386964"/>
<dbReference type="CTD" id="54879"/>
<dbReference type="MGI" id="MGI:2386964">
    <property type="gene designation" value="St7l"/>
</dbReference>
<dbReference type="VEuPathDB" id="HostDB:ENSMUSG00000045576"/>
<dbReference type="eggNOG" id="KOG3807">
    <property type="taxonomic scope" value="Eukaryota"/>
</dbReference>
<dbReference type="GeneTree" id="ENSGT00390000000873"/>
<dbReference type="InParanoid" id="Q8K4P7"/>
<dbReference type="OMA" id="QDYEIMQ"/>
<dbReference type="OrthoDB" id="5914722at2759"/>
<dbReference type="PhylomeDB" id="Q8K4P7"/>
<dbReference type="TreeFam" id="TF314162"/>
<dbReference type="BioGRID-ORCS" id="229681">
    <property type="hits" value="2 hits in 78 CRISPR screens"/>
</dbReference>
<dbReference type="ChiTaRS" id="St7l">
    <property type="organism name" value="mouse"/>
</dbReference>
<dbReference type="PRO" id="PR:Q8K4P7"/>
<dbReference type="Proteomes" id="UP000000589">
    <property type="component" value="Chromosome 3"/>
</dbReference>
<dbReference type="RNAct" id="Q8K4P7">
    <property type="molecule type" value="protein"/>
</dbReference>
<dbReference type="Bgee" id="ENSMUSG00000045576">
    <property type="expression patterns" value="Expressed in right kidney and 248 other cell types or tissues"/>
</dbReference>
<dbReference type="ExpressionAtlas" id="Q8K4P7">
    <property type="expression patterns" value="baseline and differential"/>
</dbReference>
<dbReference type="GO" id="GO:0016020">
    <property type="term" value="C:membrane"/>
    <property type="evidence" value="ECO:0007669"/>
    <property type="project" value="UniProtKB-SubCell"/>
</dbReference>
<dbReference type="GO" id="GO:0030308">
    <property type="term" value="P:negative regulation of cell growth"/>
    <property type="evidence" value="ECO:0000314"/>
    <property type="project" value="BHF-UCL"/>
</dbReference>
<dbReference type="CDD" id="cd11557">
    <property type="entry name" value="ST7"/>
    <property type="match status" value="1"/>
</dbReference>
<dbReference type="InterPro" id="IPR007311">
    <property type="entry name" value="ST7"/>
</dbReference>
<dbReference type="PANTHER" id="PTHR12745">
    <property type="entry name" value="SUPPRESSION OF TUMORIGENICITY 7"/>
    <property type="match status" value="1"/>
</dbReference>
<dbReference type="PANTHER" id="PTHR12745:SF4">
    <property type="entry name" value="SUPPRESSOR OF TUMORIGENICITY 7 PROTEIN-LIKE"/>
    <property type="match status" value="1"/>
</dbReference>
<dbReference type="Pfam" id="PF04184">
    <property type="entry name" value="ST7"/>
    <property type="match status" value="1"/>
</dbReference>